<comment type="sequence caution" evidence="1">
    <conflict type="erroneous initiation">
        <sequence resource="EMBL-CDS" id="CAB85521"/>
    </conflict>
    <text>Truncated N-terminus.</text>
</comment>
<name>FB336_ARATH</name>
<reference key="1">
    <citation type="journal article" date="2000" name="Nature">
        <title>Sequence and analysis of chromosome 5 of the plant Arabidopsis thaliana.</title>
        <authorList>
            <person name="Tabata S."/>
            <person name="Kaneko T."/>
            <person name="Nakamura Y."/>
            <person name="Kotani H."/>
            <person name="Kato T."/>
            <person name="Asamizu E."/>
            <person name="Miyajima N."/>
            <person name="Sasamoto S."/>
            <person name="Kimura T."/>
            <person name="Hosouchi T."/>
            <person name="Kawashima K."/>
            <person name="Kohara M."/>
            <person name="Matsumoto M."/>
            <person name="Matsuno A."/>
            <person name="Muraki A."/>
            <person name="Nakayama S."/>
            <person name="Nakazaki N."/>
            <person name="Naruo K."/>
            <person name="Okumura S."/>
            <person name="Shinpo S."/>
            <person name="Takeuchi C."/>
            <person name="Wada T."/>
            <person name="Watanabe A."/>
            <person name="Yamada M."/>
            <person name="Yasuda M."/>
            <person name="Sato S."/>
            <person name="de la Bastide M."/>
            <person name="Huang E."/>
            <person name="Spiegel L."/>
            <person name="Gnoj L."/>
            <person name="O'Shaughnessy A."/>
            <person name="Preston R."/>
            <person name="Habermann K."/>
            <person name="Murray J."/>
            <person name="Johnson D."/>
            <person name="Rohlfing T."/>
            <person name="Nelson J."/>
            <person name="Stoneking T."/>
            <person name="Pepin K."/>
            <person name="Spieth J."/>
            <person name="Sekhon M."/>
            <person name="Armstrong J."/>
            <person name="Becker M."/>
            <person name="Belter E."/>
            <person name="Cordum H."/>
            <person name="Cordes M."/>
            <person name="Courtney L."/>
            <person name="Courtney W."/>
            <person name="Dante M."/>
            <person name="Du H."/>
            <person name="Edwards J."/>
            <person name="Fryman J."/>
            <person name="Haakensen B."/>
            <person name="Lamar E."/>
            <person name="Latreille P."/>
            <person name="Leonard S."/>
            <person name="Meyer R."/>
            <person name="Mulvaney E."/>
            <person name="Ozersky P."/>
            <person name="Riley A."/>
            <person name="Strowmatt C."/>
            <person name="Wagner-McPherson C."/>
            <person name="Wollam A."/>
            <person name="Yoakum M."/>
            <person name="Bell M."/>
            <person name="Dedhia N."/>
            <person name="Parnell L."/>
            <person name="Shah R."/>
            <person name="Rodriguez M."/>
            <person name="Hoon See L."/>
            <person name="Vil D."/>
            <person name="Baker J."/>
            <person name="Kirchoff K."/>
            <person name="Toth K."/>
            <person name="King L."/>
            <person name="Bahret A."/>
            <person name="Miller B."/>
            <person name="Marra M.A."/>
            <person name="Martienssen R."/>
            <person name="McCombie W.R."/>
            <person name="Wilson R.K."/>
            <person name="Murphy G."/>
            <person name="Bancroft I."/>
            <person name="Volckaert G."/>
            <person name="Wambutt R."/>
            <person name="Duesterhoeft A."/>
            <person name="Stiekema W."/>
            <person name="Pohl T."/>
            <person name="Entian K.-D."/>
            <person name="Terryn N."/>
            <person name="Hartley N."/>
            <person name="Bent E."/>
            <person name="Johnson S."/>
            <person name="Langham S.-A."/>
            <person name="McCullagh B."/>
            <person name="Robben J."/>
            <person name="Grymonprez B."/>
            <person name="Zimmermann W."/>
            <person name="Ramsperger U."/>
            <person name="Wedler H."/>
            <person name="Balke K."/>
            <person name="Wedler E."/>
            <person name="Peters S."/>
            <person name="van Staveren M."/>
            <person name="Dirkse W."/>
            <person name="Mooijman P."/>
            <person name="Klein Lankhorst R."/>
            <person name="Weitzenegger T."/>
            <person name="Bothe G."/>
            <person name="Rose M."/>
            <person name="Hauf J."/>
            <person name="Berneiser S."/>
            <person name="Hempel S."/>
            <person name="Feldpausch M."/>
            <person name="Lamberth S."/>
            <person name="Villarroel R."/>
            <person name="Gielen J."/>
            <person name="Ardiles W."/>
            <person name="Bents O."/>
            <person name="Lemcke K."/>
            <person name="Kolesov G."/>
            <person name="Mayer K.F.X."/>
            <person name="Rudd S."/>
            <person name="Schoof H."/>
            <person name="Schueller C."/>
            <person name="Zaccaria P."/>
            <person name="Mewes H.-W."/>
            <person name="Bevan M."/>
            <person name="Fransz P.F."/>
        </authorList>
    </citation>
    <scope>NUCLEOTIDE SEQUENCE [LARGE SCALE GENOMIC DNA]</scope>
    <source>
        <strain>cv. Columbia</strain>
    </source>
</reference>
<reference key="2">
    <citation type="journal article" date="2017" name="Plant J.">
        <title>Araport11: a complete reannotation of the Arabidopsis thaliana reference genome.</title>
        <authorList>
            <person name="Cheng C.Y."/>
            <person name="Krishnakumar V."/>
            <person name="Chan A.P."/>
            <person name="Thibaud-Nissen F."/>
            <person name="Schobel S."/>
            <person name="Town C.D."/>
        </authorList>
    </citation>
    <scope>GENOME REANNOTATION</scope>
    <source>
        <strain>cv. Columbia</strain>
    </source>
</reference>
<reference key="3">
    <citation type="submission" date="2005-02" db="EMBL/GenBank/DDBJ databases">
        <title>Arabidopsis ORF clones.</title>
        <authorList>
            <person name="Cheuk R.F."/>
            <person name="Chen H."/>
            <person name="Kim C.J."/>
            <person name="Shinn P."/>
            <person name="Ecker J.R."/>
        </authorList>
    </citation>
    <scope>NUCLEOTIDE SEQUENCE [LARGE SCALE MRNA]</scope>
    <source>
        <strain>cv. Columbia</strain>
    </source>
</reference>
<protein>
    <recommendedName>
        <fullName>Probable F-box protein At5g04010</fullName>
    </recommendedName>
    <alternativeName>
        <fullName>Non-specific F-box protein</fullName>
    </alternativeName>
</protein>
<keyword id="KW-1185">Reference proteome</keyword>
<evidence type="ECO:0000305" key="1"/>
<dbReference type="EMBL" id="AL162873">
    <property type="protein sequence ID" value="CAB85521.1"/>
    <property type="status" value="ALT_INIT"/>
    <property type="molecule type" value="Genomic_DNA"/>
</dbReference>
<dbReference type="EMBL" id="CP002688">
    <property type="protein sequence ID" value="AED90684.1"/>
    <property type="molecule type" value="Genomic_DNA"/>
</dbReference>
<dbReference type="EMBL" id="BT020613">
    <property type="protein sequence ID" value="AAW81721.1"/>
    <property type="molecule type" value="mRNA"/>
</dbReference>
<dbReference type="PIR" id="T48428">
    <property type="entry name" value="T48428"/>
</dbReference>
<dbReference type="RefSeq" id="NP_196021.2">
    <property type="nucleotide sequence ID" value="NM_120483.3"/>
</dbReference>
<dbReference type="STRING" id="3702.Q5EAF6"/>
<dbReference type="iPTMnet" id="Q5EAF6"/>
<dbReference type="PaxDb" id="3702-AT5G04010.1"/>
<dbReference type="DNASU" id="830280"/>
<dbReference type="EnsemblPlants" id="AT5G04010.1">
    <property type="protein sequence ID" value="AT5G04010.1"/>
    <property type="gene ID" value="AT5G04010"/>
</dbReference>
<dbReference type="GeneID" id="830280"/>
<dbReference type="Gramene" id="AT5G04010.1">
    <property type="protein sequence ID" value="AT5G04010.1"/>
    <property type="gene ID" value="AT5G04010"/>
</dbReference>
<dbReference type="KEGG" id="ath:AT5G04010"/>
<dbReference type="Araport" id="AT5G04010"/>
<dbReference type="TAIR" id="AT5G04010"/>
<dbReference type="eggNOG" id="ENOG502RXK2">
    <property type="taxonomic scope" value="Eukaryota"/>
</dbReference>
<dbReference type="HOGENOM" id="CLU_065678_1_0_1"/>
<dbReference type="InParanoid" id="Q5EAF6"/>
<dbReference type="OMA" id="MHKEDDE"/>
<dbReference type="PhylomeDB" id="Q5EAF6"/>
<dbReference type="PRO" id="PR:Q5EAF6"/>
<dbReference type="Proteomes" id="UP000006548">
    <property type="component" value="Chromosome 5"/>
</dbReference>
<dbReference type="ExpressionAtlas" id="Q5EAF6">
    <property type="expression patterns" value="baseline and differential"/>
</dbReference>
<dbReference type="Gene3D" id="1.20.1280.50">
    <property type="match status" value="1"/>
</dbReference>
<dbReference type="InterPro" id="IPR036047">
    <property type="entry name" value="F-box-like_dom_sf"/>
</dbReference>
<dbReference type="InterPro" id="IPR001810">
    <property type="entry name" value="F-box_dom"/>
</dbReference>
<dbReference type="PANTHER" id="PTHR12874">
    <property type="entry name" value="F-BOX ONLY PROTEIN 48-RELATED"/>
    <property type="match status" value="1"/>
</dbReference>
<dbReference type="PANTHER" id="PTHR12874:SF16">
    <property type="entry name" value="OS01G0800800 PROTEIN"/>
    <property type="match status" value="1"/>
</dbReference>
<dbReference type="Pfam" id="PF00646">
    <property type="entry name" value="F-box"/>
    <property type="match status" value="1"/>
</dbReference>
<dbReference type="SUPFAM" id="SSF81383">
    <property type="entry name" value="F-box domain"/>
    <property type="match status" value="1"/>
</dbReference>
<proteinExistence type="evidence at transcript level"/>
<feature type="chain" id="PRO_0000396052" description="Probable F-box protein At5g04010">
    <location>
        <begin position="1"/>
        <end position="287"/>
    </location>
</feature>
<feature type="domain" description="F-box; degenerate">
    <location>
        <begin position="50"/>
        <end position="101"/>
    </location>
</feature>
<sequence>MSTYVSSVFSLATMKQNPLKRKRNDEITEEKVVLLMAMHKEDDEHQHTKPSPPSWEILCLVGPYMDPESLAVASCVSTTWSKCFSSEDLWKSLPATRHSIFAKAITKEGAKPAWLSYKRLISEAESAAKRRRNNQPAEPKISLSDLVFIVHVSAGSKEAVVVKQGKDLVFGSNERFQIEADVRDSGFTADMKDVSMSWNVVLRNYERMFLMSETVIKSLDSMIGWFTDELPGTKNRYCDGSNLVGEVKPSFNEDVLDKVVFAIADSRNWKSLFVDDVLRYLQCFLVD</sequence>
<gene>
    <name type="primary">NSFBx</name>
    <name type="ordered locus">At5g04010</name>
    <name type="ORF">F8F6.220</name>
</gene>
<organism>
    <name type="scientific">Arabidopsis thaliana</name>
    <name type="common">Mouse-ear cress</name>
    <dbReference type="NCBI Taxonomy" id="3702"/>
    <lineage>
        <taxon>Eukaryota</taxon>
        <taxon>Viridiplantae</taxon>
        <taxon>Streptophyta</taxon>
        <taxon>Embryophyta</taxon>
        <taxon>Tracheophyta</taxon>
        <taxon>Spermatophyta</taxon>
        <taxon>Magnoliopsida</taxon>
        <taxon>eudicotyledons</taxon>
        <taxon>Gunneridae</taxon>
        <taxon>Pentapetalae</taxon>
        <taxon>rosids</taxon>
        <taxon>malvids</taxon>
        <taxon>Brassicales</taxon>
        <taxon>Brassicaceae</taxon>
        <taxon>Camelineae</taxon>
        <taxon>Arabidopsis</taxon>
    </lineage>
</organism>
<accession>Q5EAF6</accession>
<accession>Q9LZA9</accession>